<evidence type="ECO:0000255" key="1">
    <source>
        <dbReference type="HAMAP-Rule" id="MF_01014"/>
    </source>
</evidence>
<name>HIS4_NITSB</name>
<protein>
    <recommendedName>
        <fullName evidence="1">1-(5-phosphoribosyl)-5-[(5-phosphoribosylamino)methylideneamino] imidazole-4-carboxamide isomerase</fullName>
        <ecNumber evidence="1">5.3.1.16</ecNumber>
    </recommendedName>
    <alternativeName>
        <fullName evidence="1">Phosphoribosylformimino-5-aminoimidazole carboxamide ribotide isomerase</fullName>
    </alternativeName>
</protein>
<reference key="1">
    <citation type="journal article" date="2007" name="Proc. Natl. Acad. Sci. U.S.A.">
        <title>Deep-sea vent epsilon-proteobacterial genomes provide insights into emergence of pathogens.</title>
        <authorList>
            <person name="Nakagawa S."/>
            <person name="Takaki Y."/>
            <person name="Shimamura S."/>
            <person name="Reysenbach A.-L."/>
            <person name="Takai K."/>
            <person name="Horikoshi K."/>
        </authorList>
    </citation>
    <scope>NUCLEOTIDE SEQUENCE [LARGE SCALE GENOMIC DNA]</scope>
    <source>
        <strain>SB155-2</strain>
    </source>
</reference>
<organism>
    <name type="scientific">Nitratiruptor sp. (strain SB155-2)</name>
    <dbReference type="NCBI Taxonomy" id="387092"/>
    <lineage>
        <taxon>Bacteria</taxon>
        <taxon>Pseudomonadati</taxon>
        <taxon>Campylobacterota</taxon>
        <taxon>Epsilonproteobacteria</taxon>
        <taxon>Nautiliales</taxon>
        <taxon>Nitratiruptoraceae</taxon>
        <taxon>Nitratiruptor</taxon>
    </lineage>
</organism>
<accession>A6Q4V9</accession>
<comment type="catalytic activity">
    <reaction evidence="1">
        <text>1-(5-phospho-beta-D-ribosyl)-5-[(5-phospho-beta-D-ribosylamino)methylideneamino]imidazole-4-carboxamide = 5-[(5-phospho-1-deoxy-D-ribulos-1-ylimino)methylamino]-1-(5-phospho-beta-D-ribosyl)imidazole-4-carboxamide</text>
        <dbReference type="Rhea" id="RHEA:15469"/>
        <dbReference type="ChEBI" id="CHEBI:58435"/>
        <dbReference type="ChEBI" id="CHEBI:58525"/>
        <dbReference type="EC" id="5.3.1.16"/>
    </reaction>
</comment>
<comment type="pathway">
    <text evidence="1">Amino-acid biosynthesis; L-histidine biosynthesis; L-histidine from 5-phospho-alpha-D-ribose 1-diphosphate: step 4/9.</text>
</comment>
<comment type="subcellular location">
    <subcellularLocation>
        <location evidence="1">Cytoplasm</location>
    </subcellularLocation>
</comment>
<comment type="similarity">
    <text evidence="1">Belongs to the HisA/HisF family.</text>
</comment>
<proteinExistence type="inferred from homology"/>
<feature type="chain" id="PRO_1000063222" description="1-(5-phosphoribosyl)-5-[(5-phosphoribosylamino)methylideneamino] imidazole-4-carboxamide isomerase">
    <location>
        <begin position="1"/>
        <end position="238"/>
    </location>
</feature>
<feature type="active site" description="Proton acceptor" evidence="1">
    <location>
        <position position="8"/>
    </location>
</feature>
<feature type="active site" description="Proton donor" evidence="1">
    <location>
        <position position="127"/>
    </location>
</feature>
<keyword id="KW-0028">Amino-acid biosynthesis</keyword>
<keyword id="KW-0963">Cytoplasm</keyword>
<keyword id="KW-0368">Histidine biosynthesis</keyword>
<keyword id="KW-0413">Isomerase</keyword>
<keyword id="KW-1185">Reference proteome</keyword>
<sequence length="238" mass="25645">MEILPAIDLKDGKAVRLTKGLMESAKIYSDEPWQVAKRFEEMGSRWLHLVDLNGAFAGEPKNLEQIKKIRANTSLKIELGGGIRDEETIRKYIDLGIERLILGSIAVKNPQFVKAMAAKYPIAVGIDAIDGFVAVEGWAKTSTMRATDLAREFAKSGVQAIICTDVGKDGTLSGVNVDFTVSIAEASGIDTIASGGVRDIEDIKKLQATGTVAGVIVGKAFYEGTLDLEEAFRLVQNG</sequence>
<gene>
    <name evidence="1" type="primary">hisA</name>
    <name type="ordered locus">NIS_1411</name>
</gene>
<dbReference type="EC" id="5.3.1.16" evidence="1"/>
<dbReference type="EMBL" id="AP009178">
    <property type="protein sequence ID" value="BAF70518.1"/>
    <property type="molecule type" value="Genomic_DNA"/>
</dbReference>
<dbReference type="RefSeq" id="WP_012082781.1">
    <property type="nucleotide sequence ID" value="NC_009662.1"/>
</dbReference>
<dbReference type="SMR" id="A6Q4V9"/>
<dbReference type="FunCoup" id="A6Q4V9">
    <property type="interactions" value="411"/>
</dbReference>
<dbReference type="STRING" id="387092.NIS_1411"/>
<dbReference type="KEGG" id="nis:NIS_1411"/>
<dbReference type="eggNOG" id="COG0106">
    <property type="taxonomic scope" value="Bacteria"/>
</dbReference>
<dbReference type="HOGENOM" id="CLU_048577_1_2_7"/>
<dbReference type="InParanoid" id="A6Q4V9"/>
<dbReference type="OrthoDB" id="9807749at2"/>
<dbReference type="UniPathway" id="UPA00031">
    <property type="reaction ID" value="UER00009"/>
</dbReference>
<dbReference type="Proteomes" id="UP000001118">
    <property type="component" value="Chromosome"/>
</dbReference>
<dbReference type="GO" id="GO:0005737">
    <property type="term" value="C:cytoplasm"/>
    <property type="evidence" value="ECO:0007669"/>
    <property type="project" value="UniProtKB-SubCell"/>
</dbReference>
<dbReference type="GO" id="GO:0003949">
    <property type="term" value="F:1-(5-phosphoribosyl)-5-[(5-phosphoribosylamino)methylideneamino]imidazole-4-carboxamide isomerase activity"/>
    <property type="evidence" value="ECO:0007669"/>
    <property type="project" value="UniProtKB-UniRule"/>
</dbReference>
<dbReference type="GO" id="GO:0000105">
    <property type="term" value="P:L-histidine biosynthetic process"/>
    <property type="evidence" value="ECO:0007669"/>
    <property type="project" value="UniProtKB-UniRule"/>
</dbReference>
<dbReference type="GO" id="GO:0000162">
    <property type="term" value="P:L-tryptophan biosynthetic process"/>
    <property type="evidence" value="ECO:0007669"/>
    <property type="project" value="TreeGrafter"/>
</dbReference>
<dbReference type="CDD" id="cd04732">
    <property type="entry name" value="HisA"/>
    <property type="match status" value="1"/>
</dbReference>
<dbReference type="FunFam" id="3.20.20.70:FF:000009">
    <property type="entry name" value="1-(5-phosphoribosyl)-5-[(5-phosphoribosylamino)methylideneamino] imidazole-4-carboxamide isomerase"/>
    <property type="match status" value="1"/>
</dbReference>
<dbReference type="Gene3D" id="3.20.20.70">
    <property type="entry name" value="Aldolase class I"/>
    <property type="match status" value="1"/>
</dbReference>
<dbReference type="HAMAP" id="MF_01014">
    <property type="entry name" value="HisA"/>
    <property type="match status" value="1"/>
</dbReference>
<dbReference type="InterPro" id="IPR013785">
    <property type="entry name" value="Aldolase_TIM"/>
</dbReference>
<dbReference type="InterPro" id="IPR006062">
    <property type="entry name" value="His_biosynth"/>
</dbReference>
<dbReference type="InterPro" id="IPR006063">
    <property type="entry name" value="HisA_bact_arch"/>
</dbReference>
<dbReference type="InterPro" id="IPR044524">
    <property type="entry name" value="Isoase_HisA-like"/>
</dbReference>
<dbReference type="InterPro" id="IPR023016">
    <property type="entry name" value="Isoase_HisA-like_bact"/>
</dbReference>
<dbReference type="InterPro" id="IPR011060">
    <property type="entry name" value="RibuloseP-bd_barrel"/>
</dbReference>
<dbReference type="NCBIfam" id="TIGR00007">
    <property type="entry name" value="1-(5-phosphoribosyl)-5-[(5-phosphoribosylamino)methylideneamino]imidazole-4-carboxamide isomerase"/>
    <property type="match status" value="1"/>
</dbReference>
<dbReference type="PANTHER" id="PTHR43090">
    <property type="entry name" value="1-(5-PHOSPHORIBOSYL)-5-[(5-PHOSPHORIBOSYLAMINO)METHYLIDENEAMINO] IMIDAZOLE-4-CARBOXAMIDE ISOMERASE"/>
    <property type="match status" value="1"/>
</dbReference>
<dbReference type="PANTHER" id="PTHR43090:SF2">
    <property type="entry name" value="1-(5-PHOSPHORIBOSYL)-5-[(5-PHOSPHORIBOSYLAMINO)METHYLIDENEAMINO] IMIDAZOLE-4-CARBOXAMIDE ISOMERASE"/>
    <property type="match status" value="1"/>
</dbReference>
<dbReference type="Pfam" id="PF00977">
    <property type="entry name" value="His_biosynth"/>
    <property type="match status" value="1"/>
</dbReference>
<dbReference type="SUPFAM" id="SSF51366">
    <property type="entry name" value="Ribulose-phoshate binding barrel"/>
    <property type="match status" value="1"/>
</dbReference>